<organism>
    <name type="scientific">Macaca fascicularis</name>
    <name type="common">Crab-eating macaque</name>
    <name type="synonym">Cynomolgus monkey</name>
    <dbReference type="NCBI Taxonomy" id="9541"/>
    <lineage>
        <taxon>Eukaryota</taxon>
        <taxon>Metazoa</taxon>
        <taxon>Chordata</taxon>
        <taxon>Craniata</taxon>
        <taxon>Vertebrata</taxon>
        <taxon>Euteleostomi</taxon>
        <taxon>Mammalia</taxon>
        <taxon>Eutheria</taxon>
        <taxon>Euarchontoglires</taxon>
        <taxon>Primates</taxon>
        <taxon>Haplorrhini</taxon>
        <taxon>Catarrhini</taxon>
        <taxon>Cercopithecidae</taxon>
        <taxon>Cercopithecinae</taxon>
        <taxon>Macaca</taxon>
    </lineage>
</organism>
<reference key="1">
    <citation type="submission" date="2005-06" db="EMBL/GenBank/DDBJ databases">
        <title>DNA sequences of macaque genes expressed in brain or testis and its evolutionary implications.</title>
        <authorList>
            <consortium name="International consortium for macaque cDNA sequencing and analysis"/>
        </authorList>
    </citation>
    <scope>NUCLEOTIDE SEQUENCE [LARGE SCALE MRNA]</scope>
    <source>
        <tissue>Testis</tissue>
    </source>
</reference>
<comment type="function">
    <text evidence="2">Has both L-asparaginase and beta-aspartyl peptidase activity. May be involved in the production of L-aspartate, which can act as an excitatory neurotransmitter in some brain regions. Is highly active with L-Asp beta-methyl ester. Besides, has catalytic activity toward beta-aspartyl dipeptides and their methyl esters, including beta-L-Asp-L-Phe, beta-L-Asp-L-Phe methyl ester (aspartame), beta-L-Asp-L-Ala, beta-L-Asp-L-Leu and beta-L-Asp-L-Lys. Does not have aspartylglucosaminidase activity and is inactive toward GlcNAc-L-Asn. Likewise, has no activity toward glutamine.</text>
</comment>
<comment type="catalytic activity">
    <reaction evidence="2">
        <text>L-asparagine + H2O = L-aspartate + NH4(+)</text>
        <dbReference type="Rhea" id="RHEA:21016"/>
        <dbReference type="ChEBI" id="CHEBI:15377"/>
        <dbReference type="ChEBI" id="CHEBI:28938"/>
        <dbReference type="ChEBI" id="CHEBI:29991"/>
        <dbReference type="ChEBI" id="CHEBI:58048"/>
        <dbReference type="EC" id="3.5.1.1"/>
    </reaction>
</comment>
<comment type="catalytic activity">
    <reaction evidence="2">
        <text>Cleavage of a beta-linked Asp residue from the N-terminus of a polypeptide.</text>
        <dbReference type="EC" id="3.4.19.5"/>
    </reaction>
</comment>
<comment type="subunit">
    <text evidence="2">Heterodimer of an alpha and beta chain produced by autocleavage. This heterodimer may then dimerize in turn, giving rise to a heterotetramer.</text>
</comment>
<comment type="subcellular location">
    <subcellularLocation>
        <location evidence="2">Cytoplasm</location>
    </subcellularLocation>
    <text evidence="2">Midpiece of sperm tail.</text>
</comment>
<comment type="PTM">
    <text evidence="2">Cleaved into an alpha and beta chain by autocatalysis; this activates the enzyme. The N-terminal residue of the beta subunit is responsible for the nucleophile hydrolase activity.</text>
</comment>
<comment type="similarity">
    <text evidence="3">Belongs to the Ntn-hydrolase family.</text>
</comment>
<dbReference type="EC" id="3.4.19.5" evidence="2"/>
<dbReference type="EC" id="3.5.1.1" evidence="2"/>
<dbReference type="EMBL" id="AB168713">
    <property type="protein sequence ID" value="BAE00824.1"/>
    <property type="molecule type" value="mRNA"/>
</dbReference>
<dbReference type="RefSeq" id="NP_001270754.1">
    <property type="nucleotide sequence ID" value="NM_001283825.1"/>
</dbReference>
<dbReference type="RefSeq" id="XP_015289587.1">
    <property type="nucleotide sequence ID" value="XM_015434101.3"/>
</dbReference>
<dbReference type="SMR" id="Q4R7U8"/>
<dbReference type="STRING" id="9541.ENSMFAP00000002460"/>
<dbReference type="Ensembl" id="ENSMFAT00000027606.2">
    <property type="protein sequence ID" value="ENSMFAP00000002460.1"/>
    <property type="gene ID" value="ENSMFAG00000036351.2"/>
</dbReference>
<dbReference type="GeneID" id="101866084"/>
<dbReference type="KEGG" id="mcf:101866084"/>
<dbReference type="CTD" id="80150"/>
<dbReference type="VEuPathDB" id="HostDB:ENSMFAG00000036351"/>
<dbReference type="eggNOG" id="KOG1592">
    <property type="taxonomic scope" value="Eukaryota"/>
</dbReference>
<dbReference type="GeneTree" id="ENSGT00950000183045"/>
<dbReference type="OMA" id="MGIIMVD"/>
<dbReference type="OrthoDB" id="2857at314294"/>
<dbReference type="Proteomes" id="UP000233100">
    <property type="component" value="Chromosome 14"/>
</dbReference>
<dbReference type="Bgee" id="ENSMFAG00000036351">
    <property type="expression patterns" value="Expressed in adult mammalian kidney and 13 other cell types or tissues"/>
</dbReference>
<dbReference type="GO" id="GO:0005737">
    <property type="term" value="C:cytoplasm"/>
    <property type="evidence" value="ECO:0000250"/>
    <property type="project" value="UniProtKB"/>
</dbReference>
<dbReference type="GO" id="GO:0001917">
    <property type="term" value="C:photoreceptor inner segment"/>
    <property type="evidence" value="ECO:0000250"/>
    <property type="project" value="UniProtKB"/>
</dbReference>
<dbReference type="GO" id="GO:0004067">
    <property type="term" value="F:asparaginase activity"/>
    <property type="evidence" value="ECO:0000250"/>
    <property type="project" value="UniProtKB"/>
</dbReference>
<dbReference type="GO" id="GO:0008798">
    <property type="term" value="F:beta-aspartyl-peptidase activity"/>
    <property type="evidence" value="ECO:0000250"/>
    <property type="project" value="UniProtKB"/>
</dbReference>
<dbReference type="GO" id="GO:0033345">
    <property type="term" value="P:asparagine catabolic process via L-aspartate"/>
    <property type="evidence" value="ECO:0000250"/>
    <property type="project" value="UniProtKB"/>
</dbReference>
<dbReference type="GO" id="GO:0006508">
    <property type="term" value="P:proteolysis"/>
    <property type="evidence" value="ECO:0007669"/>
    <property type="project" value="UniProtKB-KW"/>
</dbReference>
<dbReference type="CDD" id="cd04702">
    <property type="entry name" value="ASRGL1_like"/>
    <property type="match status" value="1"/>
</dbReference>
<dbReference type="FunFam" id="3.60.20.30:FF:000001">
    <property type="entry name" value="Isoaspartyl peptidase/L-asparaginase"/>
    <property type="match status" value="1"/>
</dbReference>
<dbReference type="Gene3D" id="3.60.20.30">
    <property type="entry name" value="(Glycosyl)asparaginase"/>
    <property type="match status" value="1"/>
</dbReference>
<dbReference type="InterPro" id="IPR033844">
    <property type="entry name" value="ASRGL1_meta"/>
</dbReference>
<dbReference type="InterPro" id="IPR029055">
    <property type="entry name" value="Ntn_hydrolases_N"/>
</dbReference>
<dbReference type="InterPro" id="IPR000246">
    <property type="entry name" value="Peptidase_T2"/>
</dbReference>
<dbReference type="PANTHER" id="PTHR10188:SF41">
    <property type="entry name" value="ISOASPARTYL PEPTIDASE_L-ASPARAGINASE"/>
    <property type="match status" value="1"/>
</dbReference>
<dbReference type="PANTHER" id="PTHR10188">
    <property type="entry name" value="L-ASPARAGINASE"/>
    <property type="match status" value="1"/>
</dbReference>
<dbReference type="Pfam" id="PF01112">
    <property type="entry name" value="Asparaginase_2"/>
    <property type="match status" value="1"/>
</dbReference>
<dbReference type="SUPFAM" id="SSF56235">
    <property type="entry name" value="N-terminal nucleophile aminohydrolases (Ntn hydrolases)"/>
    <property type="match status" value="1"/>
</dbReference>
<name>ASGL1_MACFA</name>
<gene>
    <name type="primary">ASRGL1</name>
    <name type="ORF">QtsA-14329</name>
</gene>
<feature type="chain" id="PRO_0000420557" description="Isoaspartyl peptidase/L-asparaginase alpha chain">
    <location>
        <begin position="1"/>
        <end position="167"/>
    </location>
</feature>
<feature type="chain" id="PRO_0000420558" description="Isoaspartyl peptidase/L-asparaginase beta chain">
    <location>
        <begin position="168"/>
        <end position="308"/>
    </location>
</feature>
<feature type="active site" description="Nucleophile" evidence="1">
    <location>
        <position position="168"/>
    </location>
</feature>
<feature type="binding site" evidence="1">
    <location>
        <begin position="196"/>
        <end position="199"/>
    </location>
    <ligand>
        <name>substrate</name>
    </ligand>
</feature>
<feature type="binding site" evidence="1">
    <location>
        <begin position="219"/>
        <end position="222"/>
    </location>
    <ligand>
        <name>substrate</name>
    </ligand>
</feature>
<feature type="modified residue" description="N-acetylmethionine" evidence="2">
    <location>
        <position position="1"/>
    </location>
</feature>
<accession>Q4R7U8</accession>
<keyword id="KW-0007">Acetylation</keyword>
<keyword id="KW-0068">Autocatalytic cleavage</keyword>
<keyword id="KW-0963">Cytoplasm</keyword>
<keyword id="KW-0378">Hydrolase</keyword>
<keyword id="KW-0645">Protease</keyword>
<keyword id="KW-1185">Reference proteome</keyword>
<proteinExistence type="evidence at transcript level"/>
<evidence type="ECO:0000250" key="1"/>
<evidence type="ECO:0000250" key="2">
    <source>
        <dbReference type="UniProtKB" id="Q7L266"/>
    </source>
</evidence>
<evidence type="ECO:0000305" key="3"/>
<protein>
    <recommendedName>
        <fullName>Isoaspartyl peptidase/L-asparaginase</fullName>
        <ecNumber evidence="2">3.4.19.5</ecNumber>
        <ecNumber evidence="2">3.5.1.1</ecNumber>
    </recommendedName>
    <alternativeName>
        <fullName>Asparaginase-like protein 1</fullName>
    </alternativeName>
    <alternativeName>
        <fullName>Beta-aspartyl-peptidase</fullName>
    </alternativeName>
    <alternativeName>
        <fullName>Isoaspartyl dipeptidase</fullName>
    </alternativeName>
    <alternativeName>
        <fullName>L-asparagine amidohydrolase</fullName>
    </alternativeName>
    <component>
        <recommendedName>
            <fullName>Isoaspartyl peptidase/L-asparaginase alpha chain</fullName>
        </recommendedName>
    </component>
    <component>
        <recommendedName>
            <fullName>Isoaspartyl peptidase/L-asparaginase beta chain</fullName>
        </recommendedName>
    </component>
</protein>
<sequence>MNPIVVVHGGGAGPISKDRKERMHQGIVRAATVGYGILREGGSAVDAVEGAVVALEDDPEFNAGCGSVLNTDGEVEMDASIMDGKDLSVGAVSAVRCIANPIKLARLVMEKTPHCFLTDQGAAQFAAAMGVPEIPGEKLVTEKNKKRLEKEKHEKGAQKTDCEKNLGTVGAVALDFKGNVAYATSTGGIVNKMVGRVGDTPCVGAGGYADNDIGAISTTGHGESILKVNLARLTLFHIEQGKTVEEAADLSLGYMKSRVKGLGGLIVVSKTGDWVAKWTSTSMPWAAAKDGKLHFGIDPDDTAITDLP</sequence>